<sequence length="448" mass="51435">MCDSKDNSGVSEKCGKKFTNYPLNTTPTSLNYNLPEISKKFYNLKNKYSRNGYGLSKTEFPSSIENCPSNEYSIMYDNKDPRFLIRFLLDDGRYIIADRDDGEVFDEAPTYLDNNNHPIISRHYTGEERQKFEQVGSGDYITGEQFFQFYTQNKTRVLSNCRALDSRTILLSTAKIFPIYPPASETQLTAFVNSSFYAAAIPQLPQTSLLENIPEPTSLDDSGVLPKDAVRAVKGSALLPCIIVHDPNLNNSDKMKFNTYYLLEYKEYWHQLWSQIIPAHQTVKIQERTGISEVVQNSMIEDLNMYIGADFGMYFYLRSSGFKEQITRGLNRPLSQTPTQLGERVEEMEYYNSNDLDVRYVKHALAREFTLKRVNGEIVKNWVAVDYRMAGIQSYPNAPITNPLTLTKHTIIRCENSYDGHIFKTPLIFKNGEVIVKTNEELIPKINQ</sequence>
<gene>
    <name evidence="7" type="primary">binB</name>
    <name type="synonym">sph04</name>
</gene>
<dbReference type="EMBL" id="AJ224478">
    <property type="protein sequence ID" value="CAB37657.1"/>
    <property type="molecule type" value="Genomic_DNA"/>
</dbReference>
<dbReference type="PIR" id="C28211">
    <property type="entry name" value="C28211"/>
</dbReference>
<dbReference type="RefSeq" id="WP_036216621.1">
    <property type="nucleotide sequence ID" value="NZ_JPDJ01000092.1"/>
</dbReference>
<dbReference type="PDB" id="3WA1">
    <property type="method" value="X-ray"/>
    <property type="resolution" value="1.75 A"/>
    <property type="chains" value="A=19-407"/>
</dbReference>
<dbReference type="PDBsum" id="3WA1"/>
<dbReference type="SMR" id="P18568"/>
<dbReference type="EvolutionaryTrace" id="P18568"/>
<dbReference type="GO" id="GO:0090729">
    <property type="term" value="F:toxin activity"/>
    <property type="evidence" value="ECO:0007669"/>
    <property type="project" value="UniProtKB-KW"/>
</dbReference>
<dbReference type="GO" id="GO:0030435">
    <property type="term" value="P:sporulation resulting in formation of a cellular spore"/>
    <property type="evidence" value="ECO:0007669"/>
    <property type="project" value="UniProtKB-KW"/>
</dbReference>
<dbReference type="CDD" id="cd23429">
    <property type="entry name" value="beta-trefoil_Ricin_BinAB"/>
    <property type="match status" value="1"/>
</dbReference>
<dbReference type="Gene3D" id="2.80.10.50">
    <property type="match status" value="1"/>
</dbReference>
<proteinExistence type="evidence at protein level"/>
<comment type="function">
    <text evidence="2 5">Component of a binary toxin active against Culex and some Aedes mosquito larvae (PubMed:1512580, PubMed:8419297). This subunit is responsible for localized binding to specific regions of the host larval gut. The individual subunits are not toxic. BinAB and this subunit alone bind to the gastric caecum and posterior midgut of C.quinquefasciatus larvae. Binary toxin internalization into host gut cells requires both proteins. Does not bind to the midgut of Aedes aegypti (PubMed:1512580). Toxic to Aedes atropalpus mosquito larvae; mortality towards both C.quinquefasciatus and A.atropalpus is maximal by 48 hours. A.aegypti is not very susceptible to this toxin (PubMed:8419297). Binding component of binary toxin. The 51 kDa polypeptide acts synergetically with the 42 kDa polypeptide for expression of a larvicidal toxin.</text>
</comment>
<comment type="subunit">
    <text evidence="1">Forms a heterodimer with BinA.</text>
</comment>
<comment type="subcellular location">
    <subcellularLocation>
        <location evidence="3">Spore</location>
        <location evidence="3">Perispore</location>
    </subcellularLocation>
</comment>
<comment type="developmental stage">
    <text evidence="3">The parasporal crystal protein is produced during sporulation and accumulates as a spore inclusion; crystals are separated from the forespores by a branch of the exosporium across the cell. The matrix of the paraspore is dissolved within 15 minutes following C.quinquefasciatus larvae feeding.</text>
</comment>
<comment type="domain">
    <text evidence="4">Has an N-terminal beta-trefoil domain and a C-terminal pore-forming domain. The trefoil domain has barrel and cap subdomains; the cap has 3 possible carbohydrate-binding modules while the barrel is involved in host cell receptor binding.</text>
</comment>
<comment type="PTM">
    <text evidence="1">Processed by proteases extracted from mosquito larval gut.</text>
</comment>
<comment type="similarity">
    <text evidence="8">Belongs to the toxin_10 family.</text>
</comment>
<reference key="1">
    <citation type="journal article" date="1988" name="J. Bacteriol.">
        <title>Sequence analysis of the mosquitocidal toxin genes encoding 51.4- and 41.9-kilodalton proteins from Bacillus sphaericus 2362 and 2297.</title>
        <authorList>
            <person name="Baumann L."/>
            <person name="Broadwell A.H."/>
            <person name="Baumann P."/>
        </authorList>
    </citation>
    <scope>NUCLEOTIDE SEQUENCE [GENOMIC DNA]</scope>
    <source>
        <strain>2297</strain>
    </source>
</reference>
<reference key="2">
    <citation type="submission" date="1998-02" db="EMBL/GenBank/DDBJ databases">
        <title>Transposition of Bacillus sphaericus toxin genes.</title>
        <authorList>
            <person name="Humphreys M.J."/>
            <person name="Coleman M.M."/>
            <person name="Berry C."/>
        </authorList>
    </citation>
    <scope>NUCLEOTIDE SEQUENCE [GENOMIC DNA]</scope>
    <source>
        <strain>2297</strain>
    </source>
</reference>
<reference key="3">
    <citation type="journal article" date="1982" name="Appl. Environ. Microbiol.">
        <title>Ultrastructural analysis of spores and parasporal crystals formed by Bacillus sphaericus 2297.</title>
        <authorList>
            <person name="Yousten A.A."/>
            <person name="Davidson E.W."/>
        </authorList>
    </citation>
    <scope>DEVELOPMENTAL STAGE</scope>
    <scope>CRYSTAL DISSOLUTION FOLLOWING HOST FEEDING</scope>
    <source>
        <strain>2297</strain>
    </source>
</reference>
<reference key="4">
    <citation type="journal article" date="1992" name="J. Gen. Microbiol.">
        <title>Binding of purified Bacillus sphaericus binary toxin and its deletion derivatives to Culex quinquefasciatus gut: elucidation of functional binding domains.</title>
        <authorList>
            <person name="Oei C."/>
            <person name="Hindley J."/>
            <person name="Berry C."/>
        </authorList>
    </citation>
    <scope>FUNCTION</scope>
    <scope>HOST UPTAKE</scope>
    <scope>MUTAGENESIS OF 1-MET--LYS-45; 1-MET--PRO-35; 393-GLN--GLN-448 AND 397-ASN--GLN-448</scope>
    <source>
        <strain>2297</strain>
    </source>
</reference>
<reference key="5">
    <citation type="journal article" date="1993" name="J. Bacteriol.">
        <title>Genetic determinants of host ranges of Bacillus sphaericus mosquito larvicidal toxins.</title>
        <authorList>
            <person name="Berry C."/>
            <person name="Hindley J."/>
            <person name="Ehrhardt A.F."/>
            <person name="Grounds T."/>
            <person name="de Souza I."/>
            <person name="Davidson E.W."/>
        </authorList>
    </citation>
    <scope>FUNCTION</scope>
    <scope>HOST RANGE</scope>
    <scope>MUTAGENESIS OF 314-TYR--LEU-317</scope>
    <source>
        <strain>2297</strain>
    </source>
</reference>
<reference evidence="9" key="6">
    <citation type="journal article" date="2014" name="Proteins">
        <title>Crystal structure of BinB: a receptor binding component of the binary toxin from Lysinibacillus sphaericus.</title>
        <authorList>
            <person name="Srisucharitpanit K."/>
            <person name="Yao M."/>
            <person name="Promdonkoy B."/>
            <person name="Chimnaronk S."/>
            <person name="Tanaka I."/>
            <person name="Boonserm P."/>
        </authorList>
    </citation>
    <scope>X-RAY CRYSTALLOGRAPHY (1.75 ANGSTROMS) OF 19-407</scope>
    <scope>DOMAIN</scope>
    <scope>DISULFIDE BONDS</scope>
    <source>
        <strain>2297</strain>
    </source>
</reference>
<protein>
    <recommendedName>
        <fullName evidence="8">Binary larvicide subunit BinB</fullName>
    </recommendedName>
    <alternativeName>
        <fullName>51.4 kDa insecticidal toxin</fullName>
    </alternativeName>
    <alternativeName>
        <fullName evidence="7">BinB protein</fullName>
    </alternativeName>
    <alternativeName>
        <fullName evidence="6">Larvicidal toxin protein P51</fullName>
    </alternativeName>
</protein>
<feature type="chain" id="PRO_0000174115" description="Binary larvicide subunit BinB">
    <location>
        <begin position="1"/>
        <end position="448"/>
    </location>
</feature>
<feature type="region of interest" description="Beta-trefoil domain" evidence="4">
    <location>
        <begin position="19"/>
        <end position="200"/>
    </location>
</feature>
<feature type="region of interest" description="Probable pore-forming domain" evidence="4">
    <location>
        <begin position="226"/>
        <end position="407"/>
    </location>
</feature>
<feature type="disulfide bond" evidence="4 9">
    <location>
        <begin position="67"/>
        <end position="161"/>
    </location>
</feature>
<feature type="mutagenesis site" description="In combination with whole BinA no longer toxic, no longer binds to gastric caecum and posterior midgut of larvae, BinA is no longer internalized." evidence="2">
    <location>
        <begin position="1"/>
        <end position="45"/>
    </location>
</feature>
<feature type="mutagenesis site" description="In combination with whole BinA 5-fold decrease in toxicity." evidence="2">
    <location>
        <begin position="1"/>
        <end position="35"/>
    </location>
</feature>
<feature type="mutagenesis site" description="Increases toxicity against A.aegypti larvae, protein is more like BinB from strain 2362." evidence="5">
    <original>YFYL</original>
    <variation>LFYF</variation>
    <location>
        <begin position="314"/>
        <end position="317"/>
    </location>
</feature>
<feature type="mutagenesis site" description="In combination with whole BinA no longer toxic, BinA is no longer internalized." evidence="2">
    <location>
        <begin position="393"/>
        <end position="448"/>
    </location>
</feature>
<feature type="mutagenesis site" description="In combination with whole BinA 26-fold decrease in toxicity." evidence="2">
    <location>
        <begin position="397"/>
        <end position="448"/>
    </location>
</feature>
<feature type="sequence conflict" description="In Ref. 2; CAB37657." evidence="8" ref="2">
    <original>P</original>
    <variation>T</variation>
    <location>
        <position position="338"/>
    </location>
</feature>
<feature type="sequence conflict" description="In Ref. 2; CAB37657." evidence="8" ref="2">
    <original>H</original>
    <variation>Y</variation>
    <location>
        <position position="363"/>
    </location>
</feature>
<feature type="helix" evidence="10">
    <location>
        <begin position="36"/>
        <end position="38"/>
    </location>
</feature>
<feature type="strand" evidence="10">
    <location>
        <begin position="39"/>
        <end position="48"/>
    </location>
</feature>
<feature type="strand" evidence="10">
    <location>
        <begin position="54"/>
        <end position="56"/>
    </location>
</feature>
<feature type="strand" evidence="10">
    <location>
        <begin position="75"/>
        <end position="81"/>
    </location>
</feature>
<feature type="strand" evidence="10">
    <location>
        <begin position="84"/>
        <end position="88"/>
    </location>
</feature>
<feature type="strand" evidence="10">
    <location>
        <begin position="94"/>
        <end position="98"/>
    </location>
</feature>
<feature type="turn" evidence="10">
    <location>
        <begin position="99"/>
        <end position="101"/>
    </location>
</feature>
<feature type="strand" evidence="10">
    <location>
        <begin position="104"/>
        <end position="107"/>
    </location>
</feature>
<feature type="helix" evidence="10">
    <location>
        <begin position="113"/>
        <end position="115"/>
    </location>
</feature>
<feature type="strand" evidence="10">
    <location>
        <begin position="117"/>
        <end position="122"/>
    </location>
</feature>
<feature type="helix" evidence="10">
    <location>
        <begin position="128"/>
        <end position="130"/>
    </location>
</feature>
<feature type="strand" evidence="10">
    <location>
        <begin position="132"/>
        <end position="138"/>
    </location>
</feature>
<feature type="turn" evidence="10">
    <location>
        <begin position="140"/>
        <end position="142"/>
    </location>
</feature>
<feature type="strand" evidence="10">
    <location>
        <begin position="145"/>
        <end position="151"/>
    </location>
</feature>
<feature type="turn" evidence="10">
    <location>
        <begin position="152"/>
        <end position="155"/>
    </location>
</feature>
<feature type="strand" evidence="10">
    <location>
        <begin position="156"/>
        <end position="162"/>
    </location>
</feature>
<feature type="strand" evidence="10">
    <location>
        <begin position="164"/>
        <end position="166"/>
    </location>
</feature>
<feature type="strand" evidence="10">
    <location>
        <begin position="168"/>
        <end position="174"/>
    </location>
</feature>
<feature type="strand" evidence="10">
    <location>
        <begin position="179"/>
        <end position="181"/>
    </location>
</feature>
<feature type="helix" evidence="10">
    <location>
        <begin position="184"/>
        <end position="189"/>
    </location>
</feature>
<feature type="strand" evidence="10">
    <location>
        <begin position="191"/>
        <end position="198"/>
    </location>
</feature>
<feature type="helix" evidence="10">
    <location>
        <begin position="226"/>
        <end position="228"/>
    </location>
</feature>
<feature type="strand" evidence="10">
    <location>
        <begin position="232"/>
        <end position="240"/>
    </location>
</feature>
<feature type="helix" evidence="10">
    <location>
        <begin position="241"/>
        <end position="243"/>
    </location>
</feature>
<feature type="helix" evidence="10">
    <location>
        <begin position="251"/>
        <end position="257"/>
    </location>
</feature>
<feature type="strand" evidence="10">
    <location>
        <begin position="259"/>
        <end position="277"/>
    </location>
</feature>
<feature type="strand" evidence="10">
    <location>
        <begin position="282"/>
        <end position="290"/>
    </location>
</feature>
<feature type="helix" evidence="10">
    <location>
        <begin position="293"/>
        <end position="303"/>
    </location>
</feature>
<feature type="strand" evidence="10">
    <location>
        <begin position="304"/>
        <end position="308"/>
    </location>
</feature>
<feature type="strand" evidence="10">
    <location>
        <begin position="313"/>
        <end position="315"/>
    </location>
</feature>
<feature type="helix" evidence="10">
    <location>
        <begin position="317"/>
        <end position="320"/>
    </location>
</feature>
<feature type="helix" evidence="10">
    <location>
        <begin position="323"/>
        <end position="330"/>
    </location>
</feature>
<feature type="strand" evidence="10">
    <location>
        <begin position="338"/>
        <end position="340"/>
    </location>
</feature>
<feature type="strand" evidence="10">
    <location>
        <begin position="343"/>
        <end position="351"/>
    </location>
</feature>
<feature type="strand" evidence="10">
    <location>
        <begin position="354"/>
        <end position="356"/>
    </location>
</feature>
<feature type="strand" evidence="10">
    <location>
        <begin position="358"/>
        <end position="372"/>
    </location>
</feature>
<feature type="strand" evidence="10">
    <location>
        <begin position="378"/>
        <end position="396"/>
    </location>
</feature>
<feature type="turn" evidence="10">
    <location>
        <begin position="398"/>
        <end position="400"/>
    </location>
</feature>
<keyword id="KW-0002">3D-structure</keyword>
<keyword id="KW-1015">Disulfide bond</keyword>
<keyword id="KW-0749">Sporulation</keyword>
<keyword id="KW-0800">Toxin</keyword>
<keyword id="KW-0843">Virulence</keyword>
<name>BINB2_LYSSH</name>
<accession>P18568</accession>
<accession>Q7B2I6</accession>
<evidence type="ECO:0000250" key="1">
    <source>
        <dbReference type="UniProtKB" id="P10565"/>
    </source>
</evidence>
<evidence type="ECO:0000269" key="2">
    <source>
    </source>
</evidence>
<evidence type="ECO:0000269" key="3">
    <source>
    </source>
</evidence>
<evidence type="ECO:0000269" key="4">
    <source>
    </source>
</evidence>
<evidence type="ECO:0000269" key="5">
    <source>
    </source>
</evidence>
<evidence type="ECO:0000303" key="6">
    <source>
    </source>
</evidence>
<evidence type="ECO:0000303" key="7">
    <source ref="2"/>
</evidence>
<evidence type="ECO:0000305" key="8"/>
<evidence type="ECO:0007744" key="9">
    <source>
        <dbReference type="PDB" id="3WA1"/>
    </source>
</evidence>
<evidence type="ECO:0007829" key="10">
    <source>
        <dbReference type="PDB" id="3WA1"/>
    </source>
</evidence>
<organism>
    <name type="scientific">Lysinibacillus sphaericus</name>
    <name type="common">Bacillus sphaericus</name>
    <dbReference type="NCBI Taxonomy" id="1421"/>
    <lineage>
        <taxon>Bacteria</taxon>
        <taxon>Bacillati</taxon>
        <taxon>Bacillota</taxon>
        <taxon>Bacilli</taxon>
        <taxon>Bacillales</taxon>
        <taxon>Bacillaceae</taxon>
        <taxon>Lysinibacillus</taxon>
    </lineage>
</organism>